<reference key="1">
    <citation type="journal article" date="2002" name="Proc. Natl. Acad. Sci. U.S.A.">
        <title>The genome sequence of Bifidobacterium longum reflects its adaptation to the human gastrointestinal tract.</title>
        <authorList>
            <person name="Schell M.A."/>
            <person name="Karmirantzou M."/>
            <person name="Snel B."/>
            <person name="Vilanova D."/>
            <person name="Berger B."/>
            <person name="Pessi G."/>
            <person name="Zwahlen M.-C."/>
            <person name="Desiere F."/>
            <person name="Bork P."/>
            <person name="Delley M."/>
            <person name="Pridmore R.D."/>
            <person name="Arigoni F."/>
        </authorList>
    </citation>
    <scope>NUCLEOTIDE SEQUENCE [LARGE SCALE GENOMIC DNA]</scope>
    <source>
        <strain>NCC 2705</strain>
    </source>
</reference>
<feature type="chain" id="PRO_0000224607" description="Valine--tRNA ligase">
    <location>
        <begin position="1"/>
        <end position="911"/>
    </location>
</feature>
<feature type="region of interest" description="Disordered" evidence="2">
    <location>
        <begin position="882"/>
        <end position="911"/>
    </location>
</feature>
<feature type="short sequence motif" description="'HIGH' region">
    <location>
        <begin position="57"/>
        <end position="67"/>
    </location>
</feature>
<feature type="short sequence motif" description="'KMSKS' region">
    <location>
        <begin position="599"/>
        <end position="603"/>
    </location>
</feature>
<feature type="binding site" evidence="1">
    <location>
        <position position="602"/>
    </location>
    <ligand>
        <name>ATP</name>
        <dbReference type="ChEBI" id="CHEBI:30616"/>
    </ligand>
</feature>
<comment type="function">
    <text evidence="1">Catalyzes the attachment of valine to tRNA(Val). As ValRS can inadvertently accommodate and process structurally similar amino acids such as threonine, to avoid such errors, it has a 'posttransfer' editing activity that hydrolyzes mischarged Thr-tRNA(Val) in a tRNA-dependent manner.</text>
</comment>
<comment type="catalytic activity">
    <reaction evidence="1">
        <text>tRNA(Val) + L-valine + ATP = L-valyl-tRNA(Val) + AMP + diphosphate</text>
        <dbReference type="Rhea" id="RHEA:10704"/>
        <dbReference type="Rhea" id="RHEA-COMP:9672"/>
        <dbReference type="Rhea" id="RHEA-COMP:9708"/>
        <dbReference type="ChEBI" id="CHEBI:30616"/>
        <dbReference type="ChEBI" id="CHEBI:33019"/>
        <dbReference type="ChEBI" id="CHEBI:57762"/>
        <dbReference type="ChEBI" id="CHEBI:78442"/>
        <dbReference type="ChEBI" id="CHEBI:78537"/>
        <dbReference type="ChEBI" id="CHEBI:456215"/>
        <dbReference type="EC" id="6.1.1.9"/>
    </reaction>
</comment>
<comment type="subunit">
    <text evidence="1">Monomer.</text>
</comment>
<comment type="subcellular location">
    <subcellularLocation>
        <location evidence="1">Cytoplasm</location>
    </subcellularLocation>
</comment>
<comment type="domain">
    <text evidence="1">ValRS has two distinct active sites: one for aminoacylation and one for editing. The misactivated threonine is translocated from the active site to the editing site.</text>
</comment>
<comment type="similarity">
    <text evidence="1">Belongs to the class-I aminoacyl-tRNA synthetase family. ValS type 2 subfamily.</text>
</comment>
<comment type="sequence caution" evidence="3">
    <conflict type="erroneous initiation">
        <sequence resource="EMBL-CDS" id="AAN24231"/>
    </conflict>
</comment>
<keyword id="KW-0030">Aminoacyl-tRNA synthetase</keyword>
<keyword id="KW-0067">ATP-binding</keyword>
<keyword id="KW-0963">Cytoplasm</keyword>
<keyword id="KW-0436">Ligase</keyword>
<keyword id="KW-0547">Nucleotide-binding</keyword>
<keyword id="KW-0648">Protein biosynthesis</keyword>
<keyword id="KW-1185">Reference proteome</keyword>
<sequence length="911" mass="102115">MTEGKSIINANLTPLPDKVGVDGLEDKWRTVWDEDGTYKFRNTRDRKAVYSIDTPPPTVSGSLHVGHVFSYTHTDVIARYKRMRGYDVFYPMGWDDNGLPTERRVQNYYGVRVDVSLPYDPDFKPPFEGTDGKKIDAKDQVPISRKNFIELCERLTAQDEKLFEALWRKLGLSIDWSQTYHTIGQHPQRVAQKAFLRNLARGEAYQQDAPGLWDVTFQTAVAQAELESREYPGFYHKVAFRFEDGTPIYIETTRPELLAACTSLIANPNDERYKQYFGQYVYSPLFKVKVPILAHPAAEMDKGAGIAMCCTFGDVTDVEWWRDLKLPTRPIIQRNGRIVMDTPDWIEDPAGREVFAETAGKTTFSARKIIVDKLRESGDLDGEPTPTKRMTNFYEKGDKPLEIVTSRQWYLKNGGTDAKLNAELIERGKELEFHPDFMRVRYENWVHGLNGDWLISRQRFFGVPFPLWYPVNASGEPDYDHPITPSEDRLPIDPTIDVPEGYDESQRDVPGGFTAEKDIMDTWATSSLTPQIVTHWAEPDEASKALFASTFPMDLRPQGQDIIRTWLFSTVDRAHLENKCLPWAHATLSGWILDPDHKKMSKSKGNVVVPNEPIEKFGADAVRYWAAAARLGLDATYDIGQMKIGRRLAIKLLNATKFALAIGREDENHHVGAAAEAAWNPADVTEPLDRAAMAKLALVVRQATEALESYEHSKALEVIESYFWQFCDDYIELVKNRAYGTPDEHGNVPSEKAVKSARTALGLGLDAFARLLAPYLPYATEEVWSWMHAGSGSVHRAAWPVVDPYVEAATGASPELLTWAGKAVEQLRKIKSEAKVSMKTPILSVALSAASEGVEAIHAALGDIAQAGRVVGKFDLVAKHAEESAAEGTPETEVAVEASELGEPPAKKPKH</sequence>
<gene>
    <name evidence="1" type="primary">valS</name>
    <name type="ordered locus">BL0395</name>
</gene>
<accession>Q8G777</accession>
<proteinExistence type="inferred from homology"/>
<evidence type="ECO:0000255" key="1">
    <source>
        <dbReference type="HAMAP-Rule" id="MF_02005"/>
    </source>
</evidence>
<evidence type="ECO:0000256" key="2">
    <source>
        <dbReference type="SAM" id="MobiDB-lite"/>
    </source>
</evidence>
<evidence type="ECO:0000305" key="3"/>
<dbReference type="EC" id="6.1.1.9" evidence="1"/>
<dbReference type="EMBL" id="AE014295">
    <property type="protein sequence ID" value="AAN24231.1"/>
    <property type="status" value="ALT_INIT"/>
    <property type="molecule type" value="Genomic_DNA"/>
</dbReference>
<dbReference type="RefSeq" id="NP_695595.1">
    <property type="nucleotide sequence ID" value="NC_004307.2"/>
</dbReference>
<dbReference type="RefSeq" id="WP_007054756.1">
    <property type="nucleotide sequence ID" value="NC_004307.2"/>
</dbReference>
<dbReference type="SMR" id="Q8G777"/>
<dbReference type="STRING" id="206672.BL0395"/>
<dbReference type="EnsemblBacteria" id="AAN24231">
    <property type="protein sequence ID" value="AAN24231"/>
    <property type="gene ID" value="BL0395"/>
</dbReference>
<dbReference type="GeneID" id="69577482"/>
<dbReference type="KEGG" id="blo:BL0395"/>
<dbReference type="PATRIC" id="fig|206672.9.peg.1137"/>
<dbReference type="HOGENOM" id="CLU_001493_0_2_11"/>
<dbReference type="OrthoDB" id="9810365at2"/>
<dbReference type="Proteomes" id="UP000000439">
    <property type="component" value="Chromosome"/>
</dbReference>
<dbReference type="GO" id="GO:0005829">
    <property type="term" value="C:cytosol"/>
    <property type="evidence" value="ECO:0007669"/>
    <property type="project" value="TreeGrafter"/>
</dbReference>
<dbReference type="GO" id="GO:0002161">
    <property type="term" value="F:aminoacyl-tRNA deacylase activity"/>
    <property type="evidence" value="ECO:0007669"/>
    <property type="project" value="InterPro"/>
</dbReference>
<dbReference type="GO" id="GO:0005524">
    <property type="term" value="F:ATP binding"/>
    <property type="evidence" value="ECO:0007669"/>
    <property type="project" value="UniProtKB-UniRule"/>
</dbReference>
<dbReference type="GO" id="GO:0004832">
    <property type="term" value="F:valine-tRNA ligase activity"/>
    <property type="evidence" value="ECO:0007669"/>
    <property type="project" value="UniProtKB-UniRule"/>
</dbReference>
<dbReference type="GO" id="GO:0006438">
    <property type="term" value="P:valyl-tRNA aminoacylation"/>
    <property type="evidence" value="ECO:0007669"/>
    <property type="project" value="UniProtKB-UniRule"/>
</dbReference>
<dbReference type="CDD" id="cd07962">
    <property type="entry name" value="Anticodon_Ia_Val"/>
    <property type="match status" value="1"/>
</dbReference>
<dbReference type="Gene3D" id="3.40.50.620">
    <property type="entry name" value="HUPs"/>
    <property type="match status" value="2"/>
</dbReference>
<dbReference type="Gene3D" id="1.10.730.10">
    <property type="entry name" value="Isoleucyl-tRNA Synthetase, Domain 1"/>
    <property type="match status" value="1"/>
</dbReference>
<dbReference type="Gene3D" id="3.90.740.10">
    <property type="entry name" value="Valyl/Leucyl/Isoleucyl-tRNA synthetase, editing domain"/>
    <property type="match status" value="1"/>
</dbReference>
<dbReference type="HAMAP" id="MF_02005">
    <property type="entry name" value="Val_tRNA_synth_type2"/>
    <property type="match status" value="1"/>
</dbReference>
<dbReference type="InterPro" id="IPR001412">
    <property type="entry name" value="aa-tRNA-synth_I_CS"/>
</dbReference>
<dbReference type="InterPro" id="IPR002300">
    <property type="entry name" value="aa-tRNA-synth_Ia"/>
</dbReference>
<dbReference type="InterPro" id="IPR033705">
    <property type="entry name" value="Anticodon_Ia_Val"/>
</dbReference>
<dbReference type="InterPro" id="IPR013155">
    <property type="entry name" value="M/V/L/I-tRNA-synth_anticd-bd"/>
</dbReference>
<dbReference type="InterPro" id="IPR014729">
    <property type="entry name" value="Rossmann-like_a/b/a_fold"/>
</dbReference>
<dbReference type="InterPro" id="IPR009080">
    <property type="entry name" value="tRNAsynth_Ia_anticodon-bd"/>
</dbReference>
<dbReference type="InterPro" id="IPR009008">
    <property type="entry name" value="Val/Leu/Ile-tRNA-synth_edit"/>
</dbReference>
<dbReference type="InterPro" id="IPR022874">
    <property type="entry name" value="Valine-tRNA_ligase_type_2"/>
</dbReference>
<dbReference type="InterPro" id="IPR002303">
    <property type="entry name" value="Valyl-tRNA_ligase"/>
</dbReference>
<dbReference type="InterPro" id="IPR048044">
    <property type="entry name" value="Valyl-tRNA_ligase_actino"/>
</dbReference>
<dbReference type="NCBIfam" id="NF000540">
    <property type="entry name" value="alt_ValS"/>
    <property type="match status" value="1"/>
</dbReference>
<dbReference type="NCBIfam" id="NF009687">
    <property type="entry name" value="PRK13208.1"/>
    <property type="match status" value="1"/>
</dbReference>
<dbReference type="PANTHER" id="PTHR11946:SF93">
    <property type="entry name" value="VALINE--TRNA LIGASE, CHLOROPLASTIC_MITOCHONDRIAL 2"/>
    <property type="match status" value="1"/>
</dbReference>
<dbReference type="PANTHER" id="PTHR11946">
    <property type="entry name" value="VALYL-TRNA SYNTHETASES"/>
    <property type="match status" value="1"/>
</dbReference>
<dbReference type="Pfam" id="PF08264">
    <property type="entry name" value="Anticodon_1"/>
    <property type="match status" value="1"/>
</dbReference>
<dbReference type="Pfam" id="PF00133">
    <property type="entry name" value="tRNA-synt_1"/>
    <property type="match status" value="2"/>
</dbReference>
<dbReference type="PRINTS" id="PR00986">
    <property type="entry name" value="TRNASYNTHVAL"/>
</dbReference>
<dbReference type="SUPFAM" id="SSF47323">
    <property type="entry name" value="Anticodon-binding domain of a subclass of class I aminoacyl-tRNA synthetases"/>
    <property type="match status" value="1"/>
</dbReference>
<dbReference type="SUPFAM" id="SSF52374">
    <property type="entry name" value="Nucleotidylyl transferase"/>
    <property type="match status" value="1"/>
</dbReference>
<dbReference type="SUPFAM" id="SSF50677">
    <property type="entry name" value="ValRS/IleRS/LeuRS editing domain"/>
    <property type="match status" value="1"/>
</dbReference>
<dbReference type="PROSITE" id="PS00178">
    <property type="entry name" value="AA_TRNA_LIGASE_I"/>
    <property type="match status" value="1"/>
</dbReference>
<name>SYV_BIFLO</name>
<organism>
    <name type="scientific">Bifidobacterium longum (strain NCC 2705)</name>
    <dbReference type="NCBI Taxonomy" id="206672"/>
    <lineage>
        <taxon>Bacteria</taxon>
        <taxon>Bacillati</taxon>
        <taxon>Actinomycetota</taxon>
        <taxon>Actinomycetes</taxon>
        <taxon>Bifidobacteriales</taxon>
        <taxon>Bifidobacteriaceae</taxon>
        <taxon>Bifidobacterium</taxon>
    </lineage>
</organism>
<protein>
    <recommendedName>
        <fullName evidence="1">Valine--tRNA ligase</fullName>
        <ecNumber evidence="1">6.1.1.9</ecNumber>
    </recommendedName>
    <alternativeName>
        <fullName evidence="1">Valyl-tRNA synthetase</fullName>
        <shortName evidence="1">ValRS</shortName>
    </alternativeName>
</protein>